<feature type="chain" id="PRO_0000153474" description="Histidinol-phosphate aminotransferase">
    <location>
        <begin position="1"/>
        <end position="346"/>
    </location>
</feature>
<feature type="modified residue" description="N6-(pyridoxal phosphate)lysine" evidence="1">
    <location>
        <position position="209"/>
    </location>
</feature>
<comment type="catalytic activity">
    <reaction evidence="1">
        <text>L-histidinol phosphate + 2-oxoglutarate = 3-(imidazol-4-yl)-2-oxopropyl phosphate + L-glutamate</text>
        <dbReference type="Rhea" id="RHEA:23744"/>
        <dbReference type="ChEBI" id="CHEBI:16810"/>
        <dbReference type="ChEBI" id="CHEBI:29985"/>
        <dbReference type="ChEBI" id="CHEBI:57766"/>
        <dbReference type="ChEBI" id="CHEBI:57980"/>
        <dbReference type="EC" id="2.6.1.9"/>
    </reaction>
</comment>
<comment type="cofactor">
    <cofactor evidence="1">
        <name>pyridoxal 5'-phosphate</name>
        <dbReference type="ChEBI" id="CHEBI:597326"/>
    </cofactor>
</comment>
<comment type="pathway">
    <text evidence="1">Amino-acid biosynthesis; L-histidine biosynthesis; L-histidine from 5-phospho-alpha-D-ribose 1-diphosphate: step 7/9.</text>
</comment>
<comment type="subunit">
    <text evidence="1">Homodimer.</text>
</comment>
<comment type="similarity">
    <text evidence="1">Belongs to the class-II pyridoxal-phosphate-dependent aminotransferase family. Histidinol-phosphate aminotransferase subfamily.</text>
</comment>
<evidence type="ECO:0000255" key="1">
    <source>
        <dbReference type="HAMAP-Rule" id="MF_01023"/>
    </source>
</evidence>
<accession>Q9KSX2</accession>
<sequence>MEKLARQQIQALTPYLSARRIGGSGDVWLNANESPFNNEYKTDFARLNRYSDCQPKAMIQAYANYAGVQPEQVLTSRGADEGIELLIRAFCEPNQDVILFCPPTYGMYAISAETFGVERKKVPLTTDWQLDLPSIEANLDRVKLVFVCSPNNPTGNLVKRADIIKLLEMTQDRAIVVMDEAYIDFCPEASTVDLLAQYPNLAILRTLSKAFALAGLRCGFTLANAELINVLLKVIAPYPVPVPVAEIAVQALSPAGLARAKYQVLDLGANRAYLQVGLSMVPGVQVFEGWGNYLLVKFPDGDALFKAAWEHGIILRNSPIENCVRISVGNREECEKTVAFIRNYYQ</sequence>
<reference key="1">
    <citation type="submission" date="2000-04" db="EMBL/GenBank/DDBJ databases">
        <authorList>
            <person name="Haralalka S."/>
            <person name="Roychoudhury S."/>
            <person name="Chaudhuri K."/>
        </authorList>
    </citation>
    <scope>NUCLEOTIDE SEQUENCE [GENOMIC DNA]</scope>
    <source>
        <strain>ATCC 25870 / Classical Inaba 569B / Serotype O1</strain>
    </source>
</reference>
<reference key="2">
    <citation type="journal article" date="2000" name="Nature">
        <title>DNA sequence of both chromosomes of the cholera pathogen Vibrio cholerae.</title>
        <authorList>
            <person name="Heidelberg J.F."/>
            <person name="Eisen J.A."/>
            <person name="Nelson W.C."/>
            <person name="Clayton R.A."/>
            <person name="Gwinn M.L."/>
            <person name="Dodson R.J."/>
            <person name="Haft D.H."/>
            <person name="Hickey E.K."/>
            <person name="Peterson J.D."/>
            <person name="Umayam L.A."/>
            <person name="Gill S.R."/>
            <person name="Nelson K.E."/>
            <person name="Read T.D."/>
            <person name="Tettelin H."/>
            <person name="Richardson D.L."/>
            <person name="Ermolaeva M.D."/>
            <person name="Vamathevan J.J."/>
            <person name="Bass S."/>
            <person name="Qin H."/>
            <person name="Dragoi I."/>
            <person name="Sellers P."/>
            <person name="McDonald L.A."/>
            <person name="Utterback T.R."/>
            <person name="Fleischmann R.D."/>
            <person name="Nierman W.C."/>
            <person name="White O."/>
            <person name="Salzberg S.L."/>
            <person name="Smith H.O."/>
            <person name="Colwell R.R."/>
            <person name="Mekalanos J.J."/>
            <person name="Venter J.C."/>
            <person name="Fraser C.M."/>
        </authorList>
    </citation>
    <scope>NUCLEOTIDE SEQUENCE [LARGE SCALE GENOMIC DNA]</scope>
    <source>
        <strain>ATCC 39315 / El Tor Inaba N16961</strain>
    </source>
</reference>
<organism>
    <name type="scientific">Vibrio cholerae serotype O1 (strain ATCC 39315 / El Tor Inaba N16961)</name>
    <dbReference type="NCBI Taxonomy" id="243277"/>
    <lineage>
        <taxon>Bacteria</taxon>
        <taxon>Pseudomonadati</taxon>
        <taxon>Pseudomonadota</taxon>
        <taxon>Gammaproteobacteria</taxon>
        <taxon>Vibrionales</taxon>
        <taxon>Vibrionaceae</taxon>
        <taxon>Vibrio</taxon>
    </lineage>
</organism>
<dbReference type="EC" id="2.6.1.9" evidence="1"/>
<dbReference type="EMBL" id="AF261152">
    <property type="protein sequence ID" value="AAG16129.1"/>
    <property type="molecule type" value="Genomic_DNA"/>
</dbReference>
<dbReference type="EMBL" id="AE003852">
    <property type="protein sequence ID" value="AAF94293.1"/>
    <property type="molecule type" value="Genomic_DNA"/>
</dbReference>
<dbReference type="PIR" id="A82238">
    <property type="entry name" value="A82238"/>
</dbReference>
<dbReference type="RefSeq" id="NP_230779.1">
    <property type="nucleotide sequence ID" value="NC_002505.1"/>
</dbReference>
<dbReference type="RefSeq" id="WP_000412891.1">
    <property type="nucleotide sequence ID" value="NZ_LT906614.1"/>
</dbReference>
<dbReference type="SMR" id="Q9KSX2"/>
<dbReference type="STRING" id="243277.VC_1134"/>
<dbReference type="DNASU" id="2614404"/>
<dbReference type="EnsemblBacteria" id="AAF94293">
    <property type="protein sequence ID" value="AAF94293"/>
    <property type="gene ID" value="VC_1134"/>
</dbReference>
<dbReference type="KEGG" id="vch:VC_1134"/>
<dbReference type="PATRIC" id="fig|243277.26.peg.1083"/>
<dbReference type="eggNOG" id="COG0079">
    <property type="taxonomic scope" value="Bacteria"/>
</dbReference>
<dbReference type="HOGENOM" id="CLU_017584_3_1_6"/>
<dbReference type="UniPathway" id="UPA00031">
    <property type="reaction ID" value="UER00012"/>
</dbReference>
<dbReference type="Proteomes" id="UP000000584">
    <property type="component" value="Chromosome 1"/>
</dbReference>
<dbReference type="GO" id="GO:0004400">
    <property type="term" value="F:histidinol-phosphate transaminase activity"/>
    <property type="evidence" value="ECO:0007669"/>
    <property type="project" value="UniProtKB-UniRule"/>
</dbReference>
<dbReference type="GO" id="GO:0030170">
    <property type="term" value="F:pyridoxal phosphate binding"/>
    <property type="evidence" value="ECO:0007669"/>
    <property type="project" value="InterPro"/>
</dbReference>
<dbReference type="GO" id="GO:0000105">
    <property type="term" value="P:L-histidine biosynthetic process"/>
    <property type="evidence" value="ECO:0007669"/>
    <property type="project" value="UniProtKB-UniRule"/>
</dbReference>
<dbReference type="CDD" id="cd00609">
    <property type="entry name" value="AAT_like"/>
    <property type="match status" value="1"/>
</dbReference>
<dbReference type="FunFam" id="3.40.640.10:FF:000032">
    <property type="entry name" value="Histidinol-phosphate aminotransferase"/>
    <property type="match status" value="1"/>
</dbReference>
<dbReference type="Gene3D" id="3.90.1150.10">
    <property type="entry name" value="Aspartate Aminotransferase, domain 1"/>
    <property type="match status" value="1"/>
</dbReference>
<dbReference type="Gene3D" id="3.40.640.10">
    <property type="entry name" value="Type I PLP-dependent aspartate aminotransferase-like (Major domain)"/>
    <property type="match status" value="1"/>
</dbReference>
<dbReference type="HAMAP" id="MF_01023">
    <property type="entry name" value="HisC_aminotrans_2"/>
    <property type="match status" value="1"/>
</dbReference>
<dbReference type="InterPro" id="IPR001917">
    <property type="entry name" value="Aminotrans_II_pyridoxalP_BS"/>
</dbReference>
<dbReference type="InterPro" id="IPR004839">
    <property type="entry name" value="Aminotransferase_I/II_large"/>
</dbReference>
<dbReference type="InterPro" id="IPR005861">
    <property type="entry name" value="HisP_aminotrans"/>
</dbReference>
<dbReference type="InterPro" id="IPR015424">
    <property type="entry name" value="PyrdxlP-dep_Trfase"/>
</dbReference>
<dbReference type="InterPro" id="IPR015421">
    <property type="entry name" value="PyrdxlP-dep_Trfase_major"/>
</dbReference>
<dbReference type="InterPro" id="IPR015422">
    <property type="entry name" value="PyrdxlP-dep_Trfase_small"/>
</dbReference>
<dbReference type="NCBIfam" id="TIGR01141">
    <property type="entry name" value="hisC"/>
    <property type="match status" value="1"/>
</dbReference>
<dbReference type="PANTHER" id="PTHR42885:SF2">
    <property type="entry name" value="HISTIDINOL-PHOSPHATE AMINOTRANSFERASE"/>
    <property type="match status" value="1"/>
</dbReference>
<dbReference type="PANTHER" id="PTHR42885">
    <property type="entry name" value="HISTIDINOL-PHOSPHATE AMINOTRANSFERASE-RELATED"/>
    <property type="match status" value="1"/>
</dbReference>
<dbReference type="Pfam" id="PF00155">
    <property type="entry name" value="Aminotran_1_2"/>
    <property type="match status" value="1"/>
</dbReference>
<dbReference type="SUPFAM" id="SSF53383">
    <property type="entry name" value="PLP-dependent transferases"/>
    <property type="match status" value="1"/>
</dbReference>
<dbReference type="PROSITE" id="PS00599">
    <property type="entry name" value="AA_TRANSFER_CLASS_2"/>
    <property type="match status" value="1"/>
</dbReference>
<protein>
    <recommendedName>
        <fullName evidence="1">Histidinol-phosphate aminotransferase</fullName>
        <ecNumber evidence="1">2.6.1.9</ecNumber>
    </recommendedName>
    <alternativeName>
        <fullName evidence="1">Imidazole acetol-phosphate transaminase</fullName>
    </alternativeName>
</protein>
<name>HIS8_VIBCH</name>
<keyword id="KW-0028">Amino-acid biosynthesis</keyword>
<keyword id="KW-0032">Aminotransferase</keyword>
<keyword id="KW-0368">Histidine biosynthesis</keyword>
<keyword id="KW-0663">Pyridoxal phosphate</keyword>
<keyword id="KW-1185">Reference proteome</keyword>
<keyword id="KW-0808">Transferase</keyword>
<proteinExistence type="inferred from homology"/>
<gene>
    <name evidence="1" type="primary">hisC</name>
    <name type="synonym">his8</name>
    <name type="ordered locus">VC_1134</name>
</gene>